<proteinExistence type="evidence at protein level"/>
<feature type="chain" id="PRO_0000361282" description="Blue-light-activated histidine kinase">
    <location>
        <begin position="1"/>
        <end position="489"/>
    </location>
</feature>
<feature type="domain" description="PAS" evidence="2">
    <location>
        <begin position="19"/>
        <end position="93"/>
    </location>
</feature>
<feature type="domain" description="PAC 1" evidence="3">
    <location>
        <begin position="93"/>
        <end position="147"/>
    </location>
</feature>
<feature type="domain" description="PAC 2" evidence="3">
    <location>
        <begin position="232"/>
        <end position="281"/>
    </location>
</feature>
<feature type="region of interest" description="HWE histidine kinase domain">
    <location>
        <begin position="259"/>
        <end position="341"/>
    </location>
</feature>
<feature type="modified residue" description="S-4a-FMN cysteine" evidence="1">
    <location>
        <position position="69"/>
    </location>
</feature>
<feature type="modified residue" description="Phosphohistidine; by autocatalysis" evidence="1">
    <location>
        <position position="288"/>
    </location>
</feature>
<feature type="mutagenesis site" description="Loss of ability to multiply efficiently inside host macrophages." evidence="4">
    <original>C</original>
    <variation>A</variation>
    <location>
        <position position="69"/>
    </location>
</feature>
<feature type="helix" evidence="7">
    <location>
        <begin position="22"/>
        <end position="29"/>
    </location>
</feature>
<feature type="strand" evidence="7">
    <location>
        <begin position="34"/>
        <end position="37"/>
    </location>
</feature>
<feature type="strand" evidence="7">
    <location>
        <begin position="46"/>
        <end position="49"/>
    </location>
</feature>
<feature type="helix" evidence="7">
    <location>
        <begin position="51"/>
        <end position="57"/>
    </location>
</feature>
<feature type="helix" evidence="7">
    <location>
        <begin position="61"/>
        <end position="63"/>
    </location>
</feature>
<feature type="turn" evidence="7">
    <location>
        <begin position="64"/>
        <end position="66"/>
    </location>
</feature>
<feature type="helix" evidence="7">
    <location>
        <begin position="69"/>
        <end position="72"/>
    </location>
</feature>
<feature type="helix" evidence="7">
    <location>
        <begin position="79"/>
        <end position="90"/>
    </location>
</feature>
<feature type="strand" evidence="7">
    <location>
        <begin position="95"/>
        <end position="102"/>
    </location>
</feature>
<feature type="strand" evidence="7">
    <location>
        <begin position="104"/>
        <end position="106"/>
    </location>
</feature>
<feature type="strand" evidence="7">
    <location>
        <begin position="108"/>
        <end position="119"/>
    </location>
</feature>
<feature type="strand" evidence="7">
    <location>
        <begin position="121"/>
        <end position="123"/>
    </location>
</feature>
<feature type="strand" evidence="7">
    <location>
        <begin position="125"/>
        <end position="131"/>
    </location>
</feature>
<feature type="helix" evidence="7">
    <location>
        <begin position="136"/>
        <end position="139"/>
    </location>
</feature>
<feature type="helix" evidence="7">
    <location>
        <begin position="141"/>
        <end position="169"/>
    </location>
</feature>
<feature type="strand" evidence="7">
    <location>
        <begin position="174"/>
        <end position="178"/>
    </location>
</feature>
<feature type="turn" evidence="7">
    <location>
        <begin position="179"/>
        <end position="181"/>
    </location>
</feature>
<feature type="strand" evidence="7">
    <location>
        <begin position="183"/>
        <end position="186"/>
    </location>
</feature>
<feature type="helix" evidence="7">
    <location>
        <begin position="188"/>
        <end position="193"/>
    </location>
</feature>
<feature type="strand" evidence="7">
    <location>
        <begin position="198"/>
        <end position="200"/>
    </location>
</feature>
<feature type="helix" evidence="7">
    <location>
        <begin position="204"/>
        <end position="208"/>
    </location>
</feature>
<feature type="turn" evidence="7">
    <location>
        <begin position="213"/>
        <end position="215"/>
    </location>
</feature>
<feature type="helix" evidence="7">
    <location>
        <begin position="216"/>
        <end position="223"/>
    </location>
</feature>
<feature type="strand" evidence="7">
    <location>
        <begin position="232"/>
        <end position="239"/>
    </location>
</feature>
<feature type="strand" evidence="7">
    <location>
        <begin position="245"/>
        <end position="255"/>
    </location>
</feature>
<feature type="strand" evidence="7">
    <location>
        <begin position="257"/>
        <end position="259"/>
    </location>
</feature>
<feature type="strand" evidence="7">
    <location>
        <begin position="261"/>
        <end position="268"/>
    </location>
</feature>
<feature type="helix" evidence="6">
    <location>
        <begin position="270"/>
        <end position="304"/>
    </location>
</feature>
<feature type="strand" evidence="6">
    <location>
        <begin position="305"/>
        <end position="307"/>
    </location>
</feature>
<feature type="helix" evidence="6">
    <location>
        <begin position="311"/>
        <end position="333"/>
    </location>
</feature>
<feature type="turn" evidence="6">
    <location>
        <begin position="334"/>
        <end position="336"/>
    </location>
</feature>
<feature type="helix" evidence="6">
    <location>
        <begin position="342"/>
        <end position="356"/>
    </location>
</feature>
<feature type="strand" evidence="6">
    <location>
        <begin position="360"/>
        <end position="364"/>
    </location>
</feature>
<feature type="helix" evidence="6">
    <location>
        <begin position="372"/>
        <end position="391"/>
    </location>
</feature>
<feature type="strand" evidence="6">
    <location>
        <begin position="396"/>
        <end position="399"/>
    </location>
</feature>
<feature type="strand" evidence="6">
    <location>
        <begin position="401"/>
        <end position="427"/>
    </location>
</feature>
<feature type="helix" evidence="6">
    <location>
        <begin position="437"/>
        <end position="444"/>
    </location>
</feature>
<feature type="helix" evidence="6">
    <location>
        <begin position="446"/>
        <end position="450"/>
    </location>
</feature>
<feature type="strand" evidence="6">
    <location>
        <begin position="453"/>
        <end position="459"/>
    </location>
</feature>
<feature type="strand" evidence="6">
    <location>
        <begin position="462"/>
        <end position="470"/>
    </location>
</feature>
<feature type="turn" evidence="6">
    <location>
        <begin position="473"/>
        <end position="475"/>
    </location>
</feature>
<accession>Q2YKK7</accession>
<evidence type="ECO:0000250" key="1"/>
<evidence type="ECO:0000255" key="2">
    <source>
        <dbReference type="PROSITE-ProRule" id="PRU00140"/>
    </source>
</evidence>
<evidence type="ECO:0000255" key="3">
    <source>
        <dbReference type="PROSITE-ProRule" id="PRU00141"/>
    </source>
</evidence>
<evidence type="ECO:0000269" key="4">
    <source>
    </source>
</evidence>
<evidence type="ECO:0000305" key="5"/>
<evidence type="ECO:0007829" key="6">
    <source>
        <dbReference type="PDB" id="5EPV"/>
    </source>
</evidence>
<evidence type="ECO:0007829" key="7">
    <source>
        <dbReference type="PDB" id="6PPS"/>
    </source>
</evidence>
<gene>
    <name type="ordered locus">BAB2_0652</name>
</gene>
<name>LOVHK_BRUA2</name>
<dbReference type="EC" id="2.7.13.3"/>
<dbReference type="EMBL" id="AM040265">
    <property type="protein sequence ID" value="CAJ12818.1"/>
    <property type="status" value="ALT_INIT"/>
    <property type="molecule type" value="Genomic_DNA"/>
</dbReference>
<dbReference type="RefSeq" id="WP_002971240.1">
    <property type="nucleotide sequence ID" value="NZ_KN046823.1"/>
</dbReference>
<dbReference type="PDB" id="5EPV">
    <property type="method" value="X-ray"/>
    <property type="resolution" value="2.51 A"/>
    <property type="chains" value="A/B/C/D=266-489"/>
</dbReference>
<dbReference type="PDB" id="6PPS">
    <property type="method" value="X-ray"/>
    <property type="resolution" value="2.80 A"/>
    <property type="chains" value="A/B/C/D=1-273"/>
</dbReference>
<dbReference type="PDBsum" id="5EPV"/>
<dbReference type="PDBsum" id="6PPS"/>
<dbReference type="SMR" id="Q2YKK7"/>
<dbReference type="STRING" id="359391.BAB2_0652"/>
<dbReference type="KEGG" id="bmf:BAB2_0652"/>
<dbReference type="PATRIC" id="fig|359391.11.peg.2834"/>
<dbReference type="HOGENOM" id="CLU_000445_114_57_5"/>
<dbReference type="BRENDA" id="2.7.13.3">
    <property type="organism ID" value="994"/>
</dbReference>
<dbReference type="PHI-base" id="PHI:3306"/>
<dbReference type="Proteomes" id="UP000002719">
    <property type="component" value="Chromosome II"/>
</dbReference>
<dbReference type="GO" id="GO:0005524">
    <property type="term" value="F:ATP binding"/>
    <property type="evidence" value="ECO:0007669"/>
    <property type="project" value="UniProtKB-KW"/>
</dbReference>
<dbReference type="GO" id="GO:0009881">
    <property type="term" value="F:photoreceptor activity"/>
    <property type="evidence" value="ECO:0007669"/>
    <property type="project" value="UniProtKB-KW"/>
</dbReference>
<dbReference type="GO" id="GO:0004673">
    <property type="term" value="F:protein histidine kinase activity"/>
    <property type="evidence" value="ECO:0007669"/>
    <property type="project" value="UniProtKB-EC"/>
</dbReference>
<dbReference type="CDD" id="cd00130">
    <property type="entry name" value="PAS"/>
    <property type="match status" value="2"/>
</dbReference>
<dbReference type="Gene3D" id="2.10.70.100">
    <property type="match status" value="1"/>
</dbReference>
<dbReference type="Gene3D" id="3.30.450.20">
    <property type="entry name" value="PAS domain"/>
    <property type="match status" value="2"/>
</dbReference>
<dbReference type="InterPro" id="IPR001610">
    <property type="entry name" value="PAC"/>
</dbReference>
<dbReference type="InterPro" id="IPR000014">
    <property type="entry name" value="PAS"/>
</dbReference>
<dbReference type="InterPro" id="IPR000700">
    <property type="entry name" value="PAS-assoc_C"/>
</dbReference>
<dbReference type="InterPro" id="IPR035965">
    <property type="entry name" value="PAS-like_dom_sf"/>
</dbReference>
<dbReference type="InterPro" id="IPR013655">
    <property type="entry name" value="PAS_fold_3"/>
</dbReference>
<dbReference type="InterPro" id="IPR011102">
    <property type="entry name" value="Sig_transdc_His_kinase_HWE"/>
</dbReference>
<dbReference type="NCBIfam" id="TIGR00229">
    <property type="entry name" value="sensory_box"/>
    <property type="match status" value="2"/>
</dbReference>
<dbReference type="PANTHER" id="PTHR41523:SF7">
    <property type="entry name" value="HISTIDINE KINASE"/>
    <property type="match status" value="1"/>
</dbReference>
<dbReference type="PANTHER" id="PTHR41523">
    <property type="entry name" value="TWO-COMPONENT SYSTEM SENSOR PROTEIN"/>
    <property type="match status" value="1"/>
</dbReference>
<dbReference type="Pfam" id="PF07536">
    <property type="entry name" value="HWE_HK"/>
    <property type="match status" value="1"/>
</dbReference>
<dbReference type="Pfam" id="PF08447">
    <property type="entry name" value="PAS_3"/>
    <property type="match status" value="1"/>
</dbReference>
<dbReference type="Pfam" id="PF13426">
    <property type="entry name" value="PAS_9"/>
    <property type="match status" value="1"/>
</dbReference>
<dbReference type="SMART" id="SM00911">
    <property type="entry name" value="HWE_HK"/>
    <property type="match status" value="1"/>
</dbReference>
<dbReference type="SMART" id="SM00086">
    <property type="entry name" value="PAC"/>
    <property type="match status" value="2"/>
</dbReference>
<dbReference type="SMART" id="SM00091">
    <property type="entry name" value="PAS"/>
    <property type="match status" value="2"/>
</dbReference>
<dbReference type="SUPFAM" id="SSF55785">
    <property type="entry name" value="PYP-like sensor domain (PAS domain)"/>
    <property type="match status" value="2"/>
</dbReference>
<dbReference type="PROSITE" id="PS50113">
    <property type="entry name" value="PAC"/>
    <property type="match status" value="2"/>
</dbReference>
<dbReference type="PROSITE" id="PS50112">
    <property type="entry name" value="PAS"/>
    <property type="match status" value="1"/>
</dbReference>
<organism>
    <name type="scientific">Brucella abortus (strain 2308)</name>
    <dbReference type="NCBI Taxonomy" id="359391"/>
    <lineage>
        <taxon>Bacteria</taxon>
        <taxon>Pseudomonadati</taxon>
        <taxon>Pseudomonadota</taxon>
        <taxon>Alphaproteobacteria</taxon>
        <taxon>Hyphomicrobiales</taxon>
        <taxon>Brucellaceae</taxon>
        <taxon>Brucella/Ochrobactrum group</taxon>
        <taxon>Brucella</taxon>
    </lineage>
</organism>
<sequence>MAIDLRPFIPFGRGALSQATDPFRAAVEFTLMPMLITNPHLPDNPIVFANPAFLKLTGYEADEVMGRNCRFLQGHGTDPAHVRAIKSAIAAEKPIDIDIINYKKSGEAFWNRLHISPVHNANGRLQHFVSSQLDVTLELSRLVELEKERKTLSIETARSKDQLDYIVEVANIGFWTREFYSGKMTCSAECRRIYGFTPDEPVHFDTILDLVVLEDRMTVVQKAHQAVTGEPYSIEYRIVTRLGETRWLETRAKALTGENPLVLGIVQDVTERKKAEANKALVSREIAHRFKNSMAMVQSIANQTLRNTYDPEQANRLFSERLRALSQAHDMLLKENWAGATIQQICATALAPFNSTFANRIHMSGPHLLVSDRVTVALSLAFYELATNAVKYGALSNEKGVINITWAIMEDKGEKKFHMRWAESRGPEVMQPARRGFGQRLLHSVLAEELKAKCDVEFAASGLLIDVLAPITPEVFPGMGHNVPEQRIA</sequence>
<comment type="function">
    <text evidence="1 4">Photosensitive kinase that is involved in increased bacterial virulence upon exposure to light. Once ejected from an infected animal host, sunlight acts as an environmental signal that increases the virulence of the bacterium, preparing it for infection of the next host (By similarity). This photoreceptor protein is directly related to the bacterium's survival and replication within host macrophages, as it is required for optimal replication of bacteria inside macrophages.</text>
</comment>
<comment type="catalytic activity">
    <reaction>
        <text>ATP + protein L-histidine = ADP + protein N-phospho-L-histidine.</text>
        <dbReference type="EC" id="2.7.13.3"/>
    </reaction>
</comment>
<comment type="induction">
    <text evidence="4">Induced after invasion of host macrophages.</text>
</comment>
<comment type="PTM">
    <text evidence="1">FMN binds covalently to cysteine after exposure to blue light and this bond is spontaneously broken in the dark.</text>
</comment>
<comment type="sequence caution" evidence="5">
    <conflict type="erroneous initiation">
        <sequence resource="EMBL-CDS" id="CAJ12818"/>
    </conflict>
</comment>
<reference key="1">
    <citation type="journal article" date="2005" name="Infect. Immun.">
        <title>Whole-genome analyses of speciation events in pathogenic Brucellae.</title>
        <authorList>
            <person name="Chain P.S."/>
            <person name="Comerci D.J."/>
            <person name="Tolmasky M.E."/>
            <person name="Larimer F.W."/>
            <person name="Malfatti S.A."/>
            <person name="Vergez L.M."/>
            <person name="Aguero F."/>
            <person name="Land M.L."/>
            <person name="Ugalde R.A."/>
            <person name="Garcia E."/>
        </authorList>
    </citation>
    <scope>NUCLEOTIDE SEQUENCE [LARGE SCALE GENOMIC DNA]</scope>
    <source>
        <strain>2308</strain>
    </source>
</reference>
<reference key="2">
    <citation type="journal article" date="2007" name="Science">
        <title>Blue-light-activated histidine kinases: two-component sensors in bacteria.</title>
        <authorList>
            <person name="Swartz T.E."/>
            <person name="Tseng T.-S."/>
            <person name="Frederickson M.A."/>
            <person name="Paris G."/>
            <person name="Comerci D.J."/>
            <person name="Rajashekara G."/>
            <person name="Kim J.-G."/>
            <person name="Mudgett M.B."/>
            <person name="Splitter G.A."/>
            <person name="Ugalde R.A."/>
            <person name="Goldbaum F.A."/>
            <person name="Briggs W.R."/>
            <person name="Bogomolni R.A."/>
        </authorList>
    </citation>
    <scope>ROLE IN VIRULENCE</scope>
    <scope>INDUCTION</scope>
    <scope>MUTAGENESIS OF CYS-69</scope>
</reference>
<keyword id="KW-0002">3D-structure</keyword>
<keyword id="KW-0067">ATP-binding</keyword>
<keyword id="KW-0157">Chromophore</keyword>
<keyword id="KW-0285">Flavoprotein</keyword>
<keyword id="KW-0288">FMN</keyword>
<keyword id="KW-0418">Kinase</keyword>
<keyword id="KW-0547">Nucleotide-binding</keyword>
<keyword id="KW-0597">Phosphoprotein</keyword>
<keyword id="KW-0600">Photoreceptor protein</keyword>
<keyword id="KW-0675">Receptor</keyword>
<keyword id="KW-1185">Reference proteome</keyword>
<keyword id="KW-0677">Repeat</keyword>
<keyword id="KW-0716">Sensory transduction</keyword>
<keyword id="KW-0808">Transferase</keyword>
<keyword id="KW-0843">Virulence</keyword>
<protein>
    <recommendedName>
        <fullName>Blue-light-activated histidine kinase</fullName>
        <ecNumber>2.7.13.3</ecNumber>
    </recommendedName>
    <alternativeName>
        <fullName>BA-LOV-histidine kinase</fullName>
        <shortName>BA-LOV-HK</shortName>
    </alternativeName>
</protein>